<proteinExistence type="inferred from homology"/>
<keyword id="KW-0028">Amino-acid biosynthesis</keyword>
<keyword id="KW-0057">Aromatic amino acid biosynthesis</keyword>
<keyword id="KW-0456">Lyase</keyword>
<keyword id="KW-0822">Tryptophan biosynthesis</keyword>
<dbReference type="EC" id="4.2.1.20" evidence="1"/>
<dbReference type="EMBL" id="BA000017">
    <property type="protein sequence ID" value="BAB57535.1"/>
    <property type="molecule type" value="Genomic_DNA"/>
</dbReference>
<dbReference type="RefSeq" id="WP_000163628.1">
    <property type="nucleotide sequence ID" value="NC_002758.2"/>
</dbReference>
<dbReference type="SMR" id="P66982"/>
<dbReference type="KEGG" id="sav:SAV1373"/>
<dbReference type="HOGENOM" id="CLU_016734_0_0_9"/>
<dbReference type="PhylomeDB" id="P66982"/>
<dbReference type="UniPathway" id="UPA00035">
    <property type="reaction ID" value="UER00044"/>
</dbReference>
<dbReference type="Proteomes" id="UP000002481">
    <property type="component" value="Chromosome"/>
</dbReference>
<dbReference type="GO" id="GO:0005829">
    <property type="term" value="C:cytosol"/>
    <property type="evidence" value="ECO:0007669"/>
    <property type="project" value="TreeGrafter"/>
</dbReference>
<dbReference type="GO" id="GO:0004834">
    <property type="term" value="F:tryptophan synthase activity"/>
    <property type="evidence" value="ECO:0007669"/>
    <property type="project" value="UniProtKB-UniRule"/>
</dbReference>
<dbReference type="CDD" id="cd04724">
    <property type="entry name" value="Tryptophan_synthase_alpha"/>
    <property type="match status" value="1"/>
</dbReference>
<dbReference type="Gene3D" id="3.20.20.70">
    <property type="entry name" value="Aldolase class I"/>
    <property type="match status" value="1"/>
</dbReference>
<dbReference type="HAMAP" id="MF_00131">
    <property type="entry name" value="Trp_synth_alpha"/>
    <property type="match status" value="1"/>
</dbReference>
<dbReference type="InterPro" id="IPR013785">
    <property type="entry name" value="Aldolase_TIM"/>
</dbReference>
<dbReference type="InterPro" id="IPR011060">
    <property type="entry name" value="RibuloseP-bd_barrel"/>
</dbReference>
<dbReference type="InterPro" id="IPR018204">
    <property type="entry name" value="Trp_synthase_alpha_AS"/>
</dbReference>
<dbReference type="InterPro" id="IPR002028">
    <property type="entry name" value="Trp_synthase_suA"/>
</dbReference>
<dbReference type="NCBIfam" id="TIGR00262">
    <property type="entry name" value="trpA"/>
    <property type="match status" value="1"/>
</dbReference>
<dbReference type="PANTHER" id="PTHR43406:SF1">
    <property type="entry name" value="TRYPTOPHAN SYNTHASE ALPHA CHAIN, CHLOROPLASTIC"/>
    <property type="match status" value="1"/>
</dbReference>
<dbReference type="PANTHER" id="PTHR43406">
    <property type="entry name" value="TRYPTOPHAN SYNTHASE, ALPHA CHAIN"/>
    <property type="match status" value="1"/>
</dbReference>
<dbReference type="Pfam" id="PF00290">
    <property type="entry name" value="Trp_syntA"/>
    <property type="match status" value="1"/>
</dbReference>
<dbReference type="SUPFAM" id="SSF51366">
    <property type="entry name" value="Ribulose-phoshate binding barrel"/>
    <property type="match status" value="1"/>
</dbReference>
<dbReference type="PROSITE" id="PS00167">
    <property type="entry name" value="TRP_SYNTHASE_ALPHA"/>
    <property type="match status" value="1"/>
</dbReference>
<comment type="function">
    <text evidence="1">The alpha subunit is responsible for the aldol cleavage of indoleglycerol phosphate to indole and glyceraldehyde 3-phosphate.</text>
</comment>
<comment type="catalytic activity">
    <reaction evidence="1">
        <text>(1S,2R)-1-C-(indol-3-yl)glycerol 3-phosphate + L-serine = D-glyceraldehyde 3-phosphate + L-tryptophan + H2O</text>
        <dbReference type="Rhea" id="RHEA:10532"/>
        <dbReference type="ChEBI" id="CHEBI:15377"/>
        <dbReference type="ChEBI" id="CHEBI:33384"/>
        <dbReference type="ChEBI" id="CHEBI:57912"/>
        <dbReference type="ChEBI" id="CHEBI:58866"/>
        <dbReference type="ChEBI" id="CHEBI:59776"/>
        <dbReference type="EC" id="4.2.1.20"/>
    </reaction>
</comment>
<comment type="pathway">
    <text evidence="1">Amino-acid biosynthesis; L-tryptophan biosynthesis; L-tryptophan from chorismate: step 5/5.</text>
</comment>
<comment type="subunit">
    <text evidence="1">Tetramer of two alpha and two beta chains.</text>
</comment>
<comment type="similarity">
    <text evidence="1">Belongs to the TrpA family.</text>
</comment>
<name>TRPA_STAAM</name>
<organism>
    <name type="scientific">Staphylococcus aureus (strain Mu50 / ATCC 700699)</name>
    <dbReference type="NCBI Taxonomy" id="158878"/>
    <lineage>
        <taxon>Bacteria</taxon>
        <taxon>Bacillati</taxon>
        <taxon>Bacillota</taxon>
        <taxon>Bacilli</taxon>
        <taxon>Bacillales</taxon>
        <taxon>Staphylococcaceae</taxon>
        <taxon>Staphylococcus</taxon>
    </lineage>
</organism>
<accession>P66982</accession>
<accession>Q99UA8</accession>
<protein>
    <recommendedName>
        <fullName evidence="1">Tryptophan synthase alpha chain</fullName>
        <ecNumber evidence="1">4.2.1.20</ecNumber>
    </recommendedName>
</protein>
<gene>
    <name evidence="1" type="primary">trpA</name>
    <name type="ordered locus">SAV1373</name>
</gene>
<evidence type="ECO:0000255" key="1">
    <source>
        <dbReference type="HAMAP-Rule" id="MF_00131"/>
    </source>
</evidence>
<feature type="chain" id="PRO_0000098844" description="Tryptophan synthase alpha chain">
    <location>
        <begin position="1"/>
        <end position="242"/>
    </location>
</feature>
<feature type="active site" description="Proton acceptor" evidence="1">
    <location>
        <position position="31"/>
    </location>
</feature>
<feature type="active site" description="Proton acceptor" evidence="1">
    <location>
        <position position="42"/>
    </location>
</feature>
<reference key="1">
    <citation type="journal article" date="2001" name="Lancet">
        <title>Whole genome sequencing of meticillin-resistant Staphylococcus aureus.</title>
        <authorList>
            <person name="Kuroda M."/>
            <person name="Ohta T."/>
            <person name="Uchiyama I."/>
            <person name="Baba T."/>
            <person name="Yuzawa H."/>
            <person name="Kobayashi I."/>
            <person name="Cui L."/>
            <person name="Oguchi A."/>
            <person name="Aoki K."/>
            <person name="Nagai Y."/>
            <person name="Lian J.-Q."/>
            <person name="Ito T."/>
            <person name="Kanamori M."/>
            <person name="Matsumaru H."/>
            <person name="Maruyama A."/>
            <person name="Murakami H."/>
            <person name="Hosoyama A."/>
            <person name="Mizutani-Ui Y."/>
            <person name="Takahashi N.K."/>
            <person name="Sawano T."/>
            <person name="Inoue R."/>
            <person name="Kaito C."/>
            <person name="Sekimizu K."/>
            <person name="Hirakawa H."/>
            <person name="Kuhara S."/>
            <person name="Goto S."/>
            <person name="Yabuzaki J."/>
            <person name="Kanehisa M."/>
            <person name="Yamashita A."/>
            <person name="Oshima K."/>
            <person name="Furuya K."/>
            <person name="Yoshino C."/>
            <person name="Shiba T."/>
            <person name="Hattori M."/>
            <person name="Ogasawara N."/>
            <person name="Hayashi H."/>
            <person name="Hiramatsu K."/>
        </authorList>
    </citation>
    <scope>NUCLEOTIDE SEQUENCE [LARGE SCALE GENOMIC DNA]</scope>
    <source>
        <strain>Mu50 / ATCC 700699</strain>
    </source>
</reference>
<sequence length="242" mass="27145">MTKLFIPYIMGNKDLIENATLLSENGADIIEIGVPFSDPVADGPVIMEAGQQAIKQGITIDYIFNQLEKHGDQIKCNYVLMTYYNIICHYGEQAFFEKCRDTGVYGLIIPDLPYELSQRLKQQFSHYGVKIISLVAMTTDDKRIKDIVSHAEGFIYTVTMNATTGQNGAFHPELKRKIESIKAIANVPVVAGFGIRTPQHVADIKEVADGIVIGSEIVKRFKSNTREEIIRYLQSIQQTLNN</sequence>